<proteinExistence type="evidence at protein level"/>
<feature type="chain" id="PRO_0000251936" description="Lysophospholipase D GDPD3">
    <location>
        <begin position="1"/>
        <end position="318"/>
    </location>
</feature>
<feature type="topological domain" description="Cytoplasmic" evidence="2">
    <location>
        <begin position="1"/>
        <end position="2"/>
    </location>
</feature>
<feature type="transmembrane region" description="Helical" evidence="2">
    <location>
        <begin position="3"/>
        <end position="23"/>
    </location>
</feature>
<feature type="topological domain" description="Extracellular" evidence="2">
    <location>
        <begin position="24"/>
        <end position="198"/>
    </location>
</feature>
<feature type="transmembrane region" description="Helical" evidence="2">
    <location>
        <begin position="199"/>
        <end position="221"/>
    </location>
</feature>
<feature type="topological domain" description="Cytoplasmic" evidence="2">
    <location>
        <begin position="222"/>
        <end position="318"/>
    </location>
</feature>
<feature type="domain" description="GP-PDE">
    <location>
        <begin position="39"/>
        <end position="308"/>
    </location>
</feature>
<feature type="binding site" evidence="2">
    <location>
        <position position="71"/>
    </location>
    <ligand>
        <name>a divalent metal cation</name>
        <dbReference type="ChEBI" id="CHEBI:60240"/>
    </ligand>
</feature>
<feature type="binding site" evidence="2">
    <location>
        <position position="73"/>
    </location>
    <ligand>
        <name>a divalent metal cation</name>
        <dbReference type="ChEBI" id="CHEBI:60240"/>
    </ligand>
</feature>
<feature type="binding site" evidence="2">
    <location>
        <position position="86"/>
    </location>
    <ligand>
        <name>a divalent metal cation</name>
        <dbReference type="ChEBI" id="CHEBI:60240"/>
    </ligand>
</feature>
<feature type="splice variant" id="VSP_036888" description="In isoform 2." evidence="4">
    <location>
        <begin position="1"/>
        <end position="62"/>
    </location>
</feature>
<accession>Q7L5L3</accession>
<accession>Q9H652</accession>
<reference key="1">
    <citation type="journal article" date="2004" name="Nat. Genet.">
        <title>Complete sequencing and characterization of 21,243 full-length human cDNAs.</title>
        <authorList>
            <person name="Ota T."/>
            <person name="Suzuki Y."/>
            <person name="Nishikawa T."/>
            <person name="Otsuki T."/>
            <person name="Sugiyama T."/>
            <person name="Irie R."/>
            <person name="Wakamatsu A."/>
            <person name="Hayashi K."/>
            <person name="Sato H."/>
            <person name="Nagai K."/>
            <person name="Kimura K."/>
            <person name="Makita H."/>
            <person name="Sekine M."/>
            <person name="Obayashi M."/>
            <person name="Nishi T."/>
            <person name="Shibahara T."/>
            <person name="Tanaka T."/>
            <person name="Ishii S."/>
            <person name="Yamamoto J."/>
            <person name="Saito K."/>
            <person name="Kawai Y."/>
            <person name="Isono Y."/>
            <person name="Nakamura Y."/>
            <person name="Nagahari K."/>
            <person name="Murakami K."/>
            <person name="Yasuda T."/>
            <person name="Iwayanagi T."/>
            <person name="Wagatsuma M."/>
            <person name="Shiratori A."/>
            <person name="Sudo H."/>
            <person name="Hosoiri T."/>
            <person name="Kaku Y."/>
            <person name="Kodaira H."/>
            <person name="Kondo H."/>
            <person name="Sugawara M."/>
            <person name="Takahashi M."/>
            <person name="Kanda K."/>
            <person name="Yokoi T."/>
            <person name="Furuya T."/>
            <person name="Kikkawa E."/>
            <person name="Omura Y."/>
            <person name="Abe K."/>
            <person name="Kamihara K."/>
            <person name="Katsuta N."/>
            <person name="Sato K."/>
            <person name="Tanikawa M."/>
            <person name="Yamazaki M."/>
            <person name="Ninomiya K."/>
            <person name="Ishibashi T."/>
            <person name="Yamashita H."/>
            <person name="Murakawa K."/>
            <person name="Fujimori K."/>
            <person name="Tanai H."/>
            <person name="Kimata M."/>
            <person name="Watanabe M."/>
            <person name="Hiraoka S."/>
            <person name="Chiba Y."/>
            <person name="Ishida S."/>
            <person name="Ono Y."/>
            <person name="Takiguchi S."/>
            <person name="Watanabe S."/>
            <person name="Yosida M."/>
            <person name="Hotuta T."/>
            <person name="Kusano J."/>
            <person name="Kanehori K."/>
            <person name="Takahashi-Fujii A."/>
            <person name="Hara H."/>
            <person name="Tanase T.-O."/>
            <person name="Nomura Y."/>
            <person name="Togiya S."/>
            <person name="Komai F."/>
            <person name="Hara R."/>
            <person name="Takeuchi K."/>
            <person name="Arita M."/>
            <person name="Imose N."/>
            <person name="Musashino K."/>
            <person name="Yuuki H."/>
            <person name="Oshima A."/>
            <person name="Sasaki N."/>
            <person name="Aotsuka S."/>
            <person name="Yoshikawa Y."/>
            <person name="Matsunawa H."/>
            <person name="Ichihara T."/>
            <person name="Shiohata N."/>
            <person name="Sano S."/>
            <person name="Moriya S."/>
            <person name="Momiyama H."/>
            <person name="Satoh N."/>
            <person name="Takami S."/>
            <person name="Terashima Y."/>
            <person name="Suzuki O."/>
            <person name="Nakagawa S."/>
            <person name="Senoh A."/>
            <person name="Mizoguchi H."/>
            <person name="Goto Y."/>
            <person name="Shimizu F."/>
            <person name="Wakebe H."/>
            <person name="Hishigaki H."/>
            <person name="Watanabe T."/>
            <person name="Sugiyama A."/>
            <person name="Takemoto M."/>
            <person name="Kawakami B."/>
            <person name="Yamazaki M."/>
            <person name="Watanabe K."/>
            <person name="Kumagai A."/>
            <person name="Itakura S."/>
            <person name="Fukuzumi Y."/>
            <person name="Fujimori Y."/>
            <person name="Komiyama M."/>
            <person name="Tashiro H."/>
            <person name="Tanigami A."/>
            <person name="Fujiwara T."/>
            <person name="Ono T."/>
            <person name="Yamada K."/>
            <person name="Fujii Y."/>
            <person name="Ozaki K."/>
            <person name="Hirao M."/>
            <person name="Ohmori Y."/>
            <person name="Kawabata A."/>
            <person name="Hikiji T."/>
            <person name="Kobatake N."/>
            <person name="Inagaki H."/>
            <person name="Ikema Y."/>
            <person name="Okamoto S."/>
            <person name="Okitani R."/>
            <person name="Kawakami T."/>
            <person name="Noguchi S."/>
            <person name="Itoh T."/>
            <person name="Shigeta K."/>
            <person name="Senba T."/>
            <person name="Matsumura K."/>
            <person name="Nakajima Y."/>
            <person name="Mizuno T."/>
            <person name="Morinaga M."/>
            <person name="Sasaki M."/>
            <person name="Togashi T."/>
            <person name="Oyama M."/>
            <person name="Hata H."/>
            <person name="Watanabe M."/>
            <person name="Komatsu T."/>
            <person name="Mizushima-Sugano J."/>
            <person name="Satoh T."/>
            <person name="Shirai Y."/>
            <person name="Takahashi Y."/>
            <person name="Nakagawa K."/>
            <person name="Okumura K."/>
            <person name="Nagase T."/>
            <person name="Nomura N."/>
            <person name="Kikuchi H."/>
            <person name="Masuho Y."/>
            <person name="Yamashita R."/>
            <person name="Nakai K."/>
            <person name="Yada T."/>
            <person name="Nakamura Y."/>
            <person name="Ohara O."/>
            <person name="Isogai T."/>
            <person name="Sugano S."/>
        </authorList>
    </citation>
    <scope>NUCLEOTIDE SEQUENCE [LARGE SCALE MRNA] (ISOFORM 2)</scope>
    <source>
        <tissue>Small intestine</tissue>
    </source>
</reference>
<reference key="2">
    <citation type="journal article" date="2004" name="Nature">
        <title>The sequence and analysis of duplication-rich human chromosome 16.</title>
        <authorList>
            <person name="Martin J."/>
            <person name="Han C."/>
            <person name="Gordon L.A."/>
            <person name="Terry A."/>
            <person name="Prabhakar S."/>
            <person name="She X."/>
            <person name="Xie G."/>
            <person name="Hellsten U."/>
            <person name="Chan Y.M."/>
            <person name="Altherr M."/>
            <person name="Couronne O."/>
            <person name="Aerts A."/>
            <person name="Bajorek E."/>
            <person name="Black S."/>
            <person name="Blumer H."/>
            <person name="Branscomb E."/>
            <person name="Brown N.C."/>
            <person name="Bruno W.J."/>
            <person name="Buckingham J.M."/>
            <person name="Callen D.F."/>
            <person name="Campbell C.S."/>
            <person name="Campbell M.L."/>
            <person name="Campbell E.W."/>
            <person name="Caoile C."/>
            <person name="Challacombe J.F."/>
            <person name="Chasteen L.A."/>
            <person name="Chertkov O."/>
            <person name="Chi H.C."/>
            <person name="Christensen M."/>
            <person name="Clark L.M."/>
            <person name="Cohn J.D."/>
            <person name="Denys M."/>
            <person name="Detter J.C."/>
            <person name="Dickson M."/>
            <person name="Dimitrijevic-Bussod M."/>
            <person name="Escobar J."/>
            <person name="Fawcett J.J."/>
            <person name="Flowers D."/>
            <person name="Fotopulos D."/>
            <person name="Glavina T."/>
            <person name="Gomez M."/>
            <person name="Gonzales E."/>
            <person name="Goodstein D."/>
            <person name="Goodwin L.A."/>
            <person name="Grady D.L."/>
            <person name="Grigoriev I."/>
            <person name="Groza M."/>
            <person name="Hammon N."/>
            <person name="Hawkins T."/>
            <person name="Haydu L."/>
            <person name="Hildebrand C.E."/>
            <person name="Huang W."/>
            <person name="Israni S."/>
            <person name="Jett J."/>
            <person name="Jewett P.B."/>
            <person name="Kadner K."/>
            <person name="Kimball H."/>
            <person name="Kobayashi A."/>
            <person name="Krawczyk M.-C."/>
            <person name="Leyba T."/>
            <person name="Longmire J.L."/>
            <person name="Lopez F."/>
            <person name="Lou Y."/>
            <person name="Lowry S."/>
            <person name="Ludeman T."/>
            <person name="Manohar C.F."/>
            <person name="Mark G.A."/>
            <person name="McMurray K.L."/>
            <person name="Meincke L.J."/>
            <person name="Morgan J."/>
            <person name="Moyzis R.K."/>
            <person name="Mundt M.O."/>
            <person name="Munk A.C."/>
            <person name="Nandkeshwar R.D."/>
            <person name="Pitluck S."/>
            <person name="Pollard M."/>
            <person name="Predki P."/>
            <person name="Parson-Quintana B."/>
            <person name="Ramirez L."/>
            <person name="Rash S."/>
            <person name="Retterer J."/>
            <person name="Ricke D.O."/>
            <person name="Robinson D.L."/>
            <person name="Rodriguez A."/>
            <person name="Salamov A."/>
            <person name="Saunders E.H."/>
            <person name="Scott D."/>
            <person name="Shough T."/>
            <person name="Stallings R.L."/>
            <person name="Stalvey M."/>
            <person name="Sutherland R.D."/>
            <person name="Tapia R."/>
            <person name="Tesmer J.G."/>
            <person name="Thayer N."/>
            <person name="Thompson L.S."/>
            <person name="Tice H."/>
            <person name="Torney D.C."/>
            <person name="Tran-Gyamfi M."/>
            <person name="Tsai M."/>
            <person name="Ulanovsky L.E."/>
            <person name="Ustaszewska A."/>
            <person name="Vo N."/>
            <person name="White P.S."/>
            <person name="Williams A.L."/>
            <person name="Wills P.L."/>
            <person name="Wu J.-R."/>
            <person name="Wu K."/>
            <person name="Yang J."/>
            <person name="DeJong P."/>
            <person name="Bruce D."/>
            <person name="Doggett N.A."/>
            <person name="Deaven L."/>
            <person name="Schmutz J."/>
            <person name="Grimwood J."/>
            <person name="Richardson P."/>
            <person name="Rokhsar D.S."/>
            <person name="Eichler E.E."/>
            <person name="Gilna P."/>
            <person name="Lucas S.M."/>
            <person name="Myers R.M."/>
            <person name="Rubin E.M."/>
            <person name="Pennacchio L.A."/>
        </authorList>
    </citation>
    <scope>NUCLEOTIDE SEQUENCE [LARGE SCALE GENOMIC DNA]</scope>
</reference>
<reference key="3">
    <citation type="journal article" date="2004" name="Genome Res.">
        <title>The status, quality, and expansion of the NIH full-length cDNA project: the Mammalian Gene Collection (MGC).</title>
        <authorList>
            <consortium name="The MGC Project Team"/>
        </authorList>
    </citation>
    <scope>NUCLEOTIDE SEQUENCE [LARGE SCALE MRNA] (ISOFORM 1)</scope>
    <source>
        <tissue>Placenta</tissue>
    </source>
</reference>
<reference key="4">
    <citation type="journal article" date="2016" name="Biochim. Biophys. Acta">
        <title>Calcium-dependent generation of N-acylethanolamines and lysophosphatidic acids by glycerophosphodiesterase GDE7.</title>
        <authorList>
            <person name="Rahman I.A."/>
            <person name="Tsuboi K."/>
            <person name="Hussain Z."/>
            <person name="Yamashita R."/>
            <person name="Okamoto Y."/>
            <person name="Uyama T."/>
            <person name="Yamazaki N."/>
            <person name="Tanaka T."/>
            <person name="Tokumura A."/>
            <person name="Ueda N."/>
        </authorList>
    </citation>
    <scope>CATALYTIC ACTIVITY</scope>
    <scope>FUNCTION</scope>
    <scope>SUBCELLULAR LOCATION</scope>
    <scope>ACTIVITY REGULATION</scope>
    <scope>TISSUE SPECIFICITY</scope>
</reference>
<dbReference type="EC" id="3.1.4.-" evidence="3"/>
<dbReference type="EMBL" id="AK026256">
    <property type="protein sequence ID" value="BAB15414.1"/>
    <property type="molecule type" value="mRNA"/>
</dbReference>
<dbReference type="EMBL" id="AC012645">
    <property type="status" value="NOT_ANNOTATED_CDS"/>
    <property type="molecule type" value="Genomic_DNA"/>
</dbReference>
<dbReference type="EMBL" id="BC002714">
    <property type="protein sequence ID" value="AAH02714.2"/>
    <property type="status" value="ALT_INIT"/>
    <property type="molecule type" value="mRNA"/>
</dbReference>
<dbReference type="CCDS" id="CCDS10671.2">
    <molecule id="Q7L5L3-2"/>
</dbReference>
<dbReference type="RefSeq" id="NP_077283.2">
    <molecule id="Q7L5L3-2"/>
    <property type="nucleotide sequence ID" value="NM_024307.3"/>
</dbReference>
<dbReference type="SMR" id="Q7L5L3"/>
<dbReference type="BioGRID" id="122571">
    <property type="interactions" value="57"/>
</dbReference>
<dbReference type="FunCoup" id="Q7L5L3">
    <property type="interactions" value="190"/>
</dbReference>
<dbReference type="IntAct" id="Q7L5L3">
    <property type="interactions" value="36"/>
</dbReference>
<dbReference type="STRING" id="9606.ENSP00000384363"/>
<dbReference type="SwissLipids" id="SLP:000001905"/>
<dbReference type="GlyGen" id="Q7L5L3">
    <property type="glycosylation" value="1 site, 1 O-linked glycan (1 site)"/>
</dbReference>
<dbReference type="iPTMnet" id="Q7L5L3"/>
<dbReference type="PhosphoSitePlus" id="Q7L5L3"/>
<dbReference type="BioMuta" id="GDPD3"/>
<dbReference type="DMDM" id="226694188"/>
<dbReference type="jPOST" id="Q7L5L3"/>
<dbReference type="MassIVE" id="Q7L5L3"/>
<dbReference type="PaxDb" id="9606-ENSP00000384363"/>
<dbReference type="PeptideAtlas" id="Q7L5L3"/>
<dbReference type="ProteomicsDB" id="68809">
    <molecule id="Q7L5L3-2"/>
</dbReference>
<dbReference type="ProteomicsDB" id="68810">
    <molecule id="Q7L5L3-1"/>
</dbReference>
<dbReference type="Pumba" id="Q7L5L3"/>
<dbReference type="Antibodypedia" id="51979">
    <property type="antibodies" value="122 antibodies from 16 providers"/>
</dbReference>
<dbReference type="DNASU" id="79153"/>
<dbReference type="Ensembl" id="ENST00000406256.8">
    <molecule id="Q7L5L3-2"/>
    <property type="protein sequence ID" value="ENSP00000384363.3"/>
    <property type="gene ID" value="ENSG00000102886.15"/>
</dbReference>
<dbReference type="GeneID" id="79153"/>
<dbReference type="KEGG" id="hsa:79153"/>
<dbReference type="MANE-Select" id="ENST00000406256.8">
    <property type="protein sequence ID" value="ENSP00000384363.3"/>
    <property type="RefSeq nucleotide sequence ID" value="NM_024307.3"/>
    <property type="RefSeq protein sequence ID" value="NP_077283.2"/>
</dbReference>
<dbReference type="UCSC" id="uc002dwp.4">
    <molecule id="Q7L5L3-2"/>
    <property type="organism name" value="human"/>
</dbReference>
<dbReference type="AGR" id="HGNC:28638"/>
<dbReference type="CTD" id="79153"/>
<dbReference type="DisGeNET" id="79153"/>
<dbReference type="GeneCards" id="GDPD3"/>
<dbReference type="HGNC" id="HGNC:28638">
    <property type="gene designation" value="GDPD3"/>
</dbReference>
<dbReference type="HPA" id="ENSG00000102886">
    <property type="expression patterns" value="Tissue enhanced (esophagus)"/>
</dbReference>
<dbReference type="MIM" id="616318">
    <property type="type" value="gene"/>
</dbReference>
<dbReference type="neXtProt" id="NX_Q7L5L3"/>
<dbReference type="OpenTargets" id="ENSG00000102886"/>
<dbReference type="PharmGKB" id="PA142671741"/>
<dbReference type="VEuPathDB" id="HostDB:ENSG00000102886"/>
<dbReference type="eggNOG" id="KOG2258">
    <property type="taxonomic scope" value="Eukaryota"/>
</dbReference>
<dbReference type="GeneTree" id="ENSGT00940000160759"/>
<dbReference type="HOGENOM" id="CLU_030006_5_1_1"/>
<dbReference type="InParanoid" id="Q7L5L3"/>
<dbReference type="OMA" id="KWAIMRK"/>
<dbReference type="OrthoDB" id="1058301at2759"/>
<dbReference type="PAN-GO" id="Q7L5L3">
    <property type="GO annotations" value="4 GO annotations based on evolutionary models"/>
</dbReference>
<dbReference type="PhylomeDB" id="Q7L5L3"/>
<dbReference type="TreeFam" id="TF328545"/>
<dbReference type="BRENDA" id="3.1.4.39">
    <property type="organism ID" value="2681"/>
</dbReference>
<dbReference type="PathwayCommons" id="Q7L5L3"/>
<dbReference type="Reactome" id="R-HSA-6814848">
    <property type="pathway name" value="Glycerophospholipid catabolism"/>
</dbReference>
<dbReference type="SignaLink" id="Q7L5L3"/>
<dbReference type="BioGRID-ORCS" id="79153">
    <property type="hits" value="10 hits in 1153 CRISPR screens"/>
</dbReference>
<dbReference type="GenomeRNAi" id="79153"/>
<dbReference type="Pharos" id="Q7L5L3">
    <property type="development level" value="Tbio"/>
</dbReference>
<dbReference type="PRO" id="PR:Q7L5L3"/>
<dbReference type="Proteomes" id="UP000005640">
    <property type="component" value="Chromosome 16"/>
</dbReference>
<dbReference type="RNAct" id="Q7L5L3">
    <property type="molecule type" value="protein"/>
</dbReference>
<dbReference type="Bgee" id="ENSG00000102886">
    <property type="expression patterns" value="Expressed in mucosa of transverse colon and 149 other cell types or tissues"/>
</dbReference>
<dbReference type="ExpressionAtlas" id="Q7L5L3">
    <property type="expression patterns" value="baseline and differential"/>
</dbReference>
<dbReference type="GO" id="GO:0005783">
    <property type="term" value="C:endoplasmic reticulum"/>
    <property type="evidence" value="ECO:0000315"/>
    <property type="project" value="UniProtKB"/>
</dbReference>
<dbReference type="GO" id="GO:0005789">
    <property type="term" value="C:endoplasmic reticulum membrane"/>
    <property type="evidence" value="ECO:0000250"/>
    <property type="project" value="UniProtKB"/>
</dbReference>
<dbReference type="GO" id="GO:0070062">
    <property type="term" value="C:extracellular exosome"/>
    <property type="evidence" value="ECO:0007005"/>
    <property type="project" value="UniProtKB"/>
</dbReference>
<dbReference type="GO" id="GO:0048471">
    <property type="term" value="C:perinuclear region of cytoplasm"/>
    <property type="evidence" value="ECO:0000250"/>
    <property type="project" value="UniProtKB"/>
</dbReference>
<dbReference type="GO" id="GO:0004622">
    <property type="term" value="F:lysophospholipase activity"/>
    <property type="evidence" value="ECO:0000318"/>
    <property type="project" value="GO_Central"/>
</dbReference>
<dbReference type="GO" id="GO:0046872">
    <property type="term" value="F:metal ion binding"/>
    <property type="evidence" value="ECO:0007669"/>
    <property type="project" value="UniProtKB-KW"/>
</dbReference>
<dbReference type="GO" id="GO:0008081">
    <property type="term" value="F:phosphoric diester hydrolase activity"/>
    <property type="evidence" value="ECO:0000315"/>
    <property type="project" value="UniProtKB"/>
</dbReference>
<dbReference type="GO" id="GO:0046475">
    <property type="term" value="P:glycerophospholipid catabolic process"/>
    <property type="evidence" value="ECO:0000318"/>
    <property type="project" value="GO_Central"/>
</dbReference>
<dbReference type="GO" id="GO:0070291">
    <property type="term" value="P:N-acylethanolamine metabolic process"/>
    <property type="evidence" value="ECO:0000315"/>
    <property type="project" value="UniProtKB"/>
</dbReference>
<dbReference type="GO" id="GO:0034638">
    <property type="term" value="P:phosphatidylcholine catabolic process"/>
    <property type="evidence" value="ECO:0007669"/>
    <property type="project" value="Ensembl"/>
</dbReference>
<dbReference type="CDD" id="cd08612">
    <property type="entry name" value="GDPD_GDE4"/>
    <property type="match status" value="1"/>
</dbReference>
<dbReference type="FunFam" id="3.20.20.190:FF:000033">
    <property type="entry name" value="Glycerophosphodiester phosphodiesterase domain containing 3"/>
    <property type="match status" value="1"/>
</dbReference>
<dbReference type="Gene3D" id="3.20.20.190">
    <property type="entry name" value="Phosphatidylinositol (PI) phosphodiesterase"/>
    <property type="match status" value="1"/>
</dbReference>
<dbReference type="InterPro" id="IPR052271">
    <property type="entry name" value="GDPD-Related"/>
</dbReference>
<dbReference type="InterPro" id="IPR030395">
    <property type="entry name" value="GP_PDE_dom"/>
</dbReference>
<dbReference type="InterPro" id="IPR017946">
    <property type="entry name" value="PLC-like_Pdiesterase_TIM-brl"/>
</dbReference>
<dbReference type="PANTHER" id="PTHR42758:SF3">
    <property type="entry name" value="LYSOPHOSPHOLIPASE D GDPD3"/>
    <property type="match status" value="1"/>
</dbReference>
<dbReference type="PANTHER" id="PTHR42758">
    <property type="entry name" value="PHOSPHATIDYLGLYCEROL PHOSPHOLIPASE C"/>
    <property type="match status" value="1"/>
</dbReference>
<dbReference type="Pfam" id="PF03009">
    <property type="entry name" value="GDPD"/>
    <property type="match status" value="1"/>
</dbReference>
<dbReference type="SUPFAM" id="SSF51695">
    <property type="entry name" value="PLC-like phosphodiesterases"/>
    <property type="match status" value="1"/>
</dbReference>
<dbReference type="PROSITE" id="PS51704">
    <property type="entry name" value="GP_PDE"/>
    <property type="match status" value="1"/>
</dbReference>
<evidence type="ECO:0000250" key="1">
    <source>
        <dbReference type="UniProtKB" id="Q99LY2"/>
    </source>
</evidence>
<evidence type="ECO:0000255" key="2"/>
<evidence type="ECO:0000269" key="3">
    <source>
    </source>
</evidence>
<evidence type="ECO:0000303" key="4">
    <source>
    </source>
</evidence>
<evidence type="ECO:0000303" key="5">
    <source>
    </source>
</evidence>
<evidence type="ECO:0000305" key="6"/>
<evidence type="ECO:0000305" key="7">
    <source>
    </source>
</evidence>
<evidence type="ECO:0000312" key="8">
    <source>
        <dbReference type="HGNC" id="HGNC:28638"/>
    </source>
</evidence>
<name>GDPD3_HUMAN</name>
<keyword id="KW-0025">Alternative splicing</keyword>
<keyword id="KW-0963">Cytoplasm</keyword>
<keyword id="KW-0256">Endoplasmic reticulum</keyword>
<keyword id="KW-0378">Hydrolase</keyword>
<keyword id="KW-0443">Lipid metabolism</keyword>
<keyword id="KW-0472">Membrane</keyword>
<keyword id="KW-0479">Metal-binding</keyword>
<keyword id="KW-1267">Proteomics identification</keyword>
<keyword id="KW-1185">Reference proteome</keyword>
<keyword id="KW-0812">Transmembrane</keyword>
<keyword id="KW-1133">Transmembrane helix</keyword>
<organism>
    <name type="scientific">Homo sapiens</name>
    <name type="common">Human</name>
    <dbReference type="NCBI Taxonomy" id="9606"/>
    <lineage>
        <taxon>Eukaryota</taxon>
        <taxon>Metazoa</taxon>
        <taxon>Chordata</taxon>
        <taxon>Craniata</taxon>
        <taxon>Vertebrata</taxon>
        <taxon>Euteleostomi</taxon>
        <taxon>Mammalia</taxon>
        <taxon>Eutheria</taxon>
        <taxon>Euarchontoglires</taxon>
        <taxon>Primates</taxon>
        <taxon>Haplorrhini</taxon>
        <taxon>Catarrhini</taxon>
        <taxon>Hominidae</taxon>
        <taxon>Homo</taxon>
    </lineage>
</organism>
<protein>
    <recommendedName>
        <fullName evidence="6">Lysophospholipase D GDPD3</fullName>
        <ecNumber evidence="3">3.1.4.-</ecNumber>
    </recommendedName>
    <alternativeName>
        <fullName evidence="1">Glycerophosphodiester phosphodiesterase 7</fullName>
    </alternativeName>
    <alternativeName>
        <fullName>Glycerophosphodiester phosphodiesterase domain-containing protein 3</fullName>
    </alternativeName>
</protein>
<gene>
    <name evidence="8" type="primary">GDPD3</name>
    <name evidence="5" type="synonym">GDE7</name>
</gene>
<sequence>MSLLLYYALPALGSYAMLSIFFLRRPHLLHTPRAPTFRIRLGAHRGGSGELLENTMEAMENSMAQRSDLLELDCQLTRDRVVVVSHDENLCRQSGLNRDVGSLDFEDLPLYKEKLEVYFSPGHFAHGSDRRMVRLEDLFQRFPRTPMSVEIKGKNEELIREIAGLVRRYDRNEITIWASEKSSVMKKCKAANPEMPLSFTISRGFWVLLSYYLGLLPFIPIPEKFFFCFLPNIINRTYFPFSCSCLNQLLAVVSKWLIMRKSLIRHLEERGVQVVFWCLNEESDFEAAFSVGATGVITDYPTALRHYLDNHGPAARTS</sequence>
<comment type="function">
    <text evidence="1 3">Hydrolyzes lysoglycerophospholipids to produce lysophosphatidic acid (LPA) and the corresponding amines (PubMed:27637550). Shows a preference for 1-O-alkyl-sn-glycero-3-phosphocholine (lyso-PAF), lysophosphatidylcholine (lyso-PC) and N-acylethanolamine lysophospholipids (PubMed:27637550). Does not display glycerophosphodiester phosphodiesterase activity, since it cannot hydrolyze either glycerophosphoinositol or glycerophosphocholine.</text>
</comment>
<comment type="catalytic activity">
    <reaction evidence="1">
        <text>1-hexadecanoyl-sn-glycero-3-phosphocholine + H2O = 1-hexadecanoyl-sn-glycero-3-phosphate + choline + H(+)</text>
        <dbReference type="Rhea" id="RHEA:38975"/>
        <dbReference type="ChEBI" id="CHEBI:15354"/>
        <dbReference type="ChEBI" id="CHEBI:15377"/>
        <dbReference type="ChEBI" id="CHEBI:15378"/>
        <dbReference type="ChEBI" id="CHEBI:57518"/>
        <dbReference type="ChEBI" id="CHEBI:72998"/>
    </reaction>
</comment>
<comment type="catalytic activity">
    <reaction evidence="3">
        <text>1-hexadecanoyl-sn-glycero-3-phosphocholine + H2O = sn-glycerol 3-phosphocholine + hexadecanoate + H(+)</text>
        <dbReference type="Rhea" id="RHEA:40435"/>
        <dbReference type="ChEBI" id="CHEBI:7896"/>
        <dbReference type="ChEBI" id="CHEBI:15377"/>
        <dbReference type="ChEBI" id="CHEBI:15378"/>
        <dbReference type="ChEBI" id="CHEBI:16870"/>
        <dbReference type="ChEBI" id="CHEBI:72998"/>
    </reaction>
    <physiologicalReaction direction="left-to-right" evidence="7">
        <dbReference type="Rhea" id="RHEA:40436"/>
    </physiologicalReaction>
</comment>
<comment type="catalytic activity">
    <reaction evidence="3">
        <text>1-O-(1Z-octadecenyl)-sn-glycero-3-phospho-N-hexadecanoyl-ethanolamine + H2O = 1-O-(1Z-octadecenyl)-sn-glycero-3-phosphate + N-hexadecanoylethanolamine + H(+)</text>
        <dbReference type="Rhea" id="RHEA:53184"/>
        <dbReference type="ChEBI" id="CHEBI:15377"/>
        <dbReference type="ChEBI" id="CHEBI:15378"/>
        <dbReference type="ChEBI" id="CHEBI:71464"/>
        <dbReference type="ChEBI" id="CHEBI:137009"/>
        <dbReference type="ChEBI" id="CHEBI:137017"/>
    </reaction>
    <physiologicalReaction direction="left-to-right" evidence="7">
        <dbReference type="Rhea" id="RHEA:53185"/>
    </physiologicalReaction>
</comment>
<comment type="catalytic activity">
    <reaction evidence="3">
        <text>N-(5Z,8Z,11Z,14Z-eicosatetraenoyl)-1-(9Z-octadecenoyl)-sn-glycero-3-phosphoethanolamine + H2O = N-(5Z,8Z,11Z,14Z-eicosatetraenoyl)-ethanolamine + 1-(9Z-octadecenoyl)-sn-glycero-3-phosphate + H(+)</text>
        <dbReference type="Rhea" id="RHEA:45544"/>
        <dbReference type="ChEBI" id="CHEBI:2700"/>
        <dbReference type="ChEBI" id="CHEBI:15377"/>
        <dbReference type="ChEBI" id="CHEBI:15378"/>
        <dbReference type="ChEBI" id="CHEBI:74544"/>
        <dbReference type="ChEBI" id="CHEBI:85223"/>
    </reaction>
    <physiologicalReaction direction="left-to-right" evidence="7">
        <dbReference type="Rhea" id="RHEA:45545"/>
    </physiologicalReaction>
</comment>
<comment type="catalytic activity">
    <reaction evidence="3">
        <text>N,1-di-(9Z-octadecenoyl)-sn-glycero-3-phosphoethanolamine + H2O = N-(9Z-octadecenoyl) ethanolamine + 1-(9Z-octadecenoyl)-sn-glycero-3-phosphate + H(+)</text>
        <dbReference type="Rhea" id="RHEA:56460"/>
        <dbReference type="ChEBI" id="CHEBI:15377"/>
        <dbReference type="ChEBI" id="CHEBI:15378"/>
        <dbReference type="ChEBI" id="CHEBI:71466"/>
        <dbReference type="ChEBI" id="CHEBI:74544"/>
        <dbReference type="ChEBI" id="CHEBI:85222"/>
    </reaction>
    <physiologicalReaction direction="left-to-right" evidence="7">
        <dbReference type="Rhea" id="RHEA:56461"/>
    </physiologicalReaction>
</comment>
<comment type="catalytic activity">
    <reaction evidence="3">
        <text>N-hexadecanoyl-1-(9Z-octadecenoyl)-sn-glycero-3-phosphoethanolamine + H2O = N-hexadecanoylethanolamine + 1-(9Z-octadecenoyl)-sn-glycero-3-phosphate + H(+)</text>
        <dbReference type="Rhea" id="RHEA:53168"/>
        <dbReference type="ChEBI" id="CHEBI:15377"/>
        <dbReference type="ChEBI" id="CHEBI:15378"/>
        <dbReference type="ChEBI" id="CHEBI:71464"/>
        <dbReference type="ChEBI" id="CHEBI:74544"/>
        <dbReference type="ChEBI" id="CHEBI:85217"/>
    </reaction>
    <physiologicalReaction direction="left-to-right" evidence="7">
        <dbReference type="Rhea" id="RHEA:53169"/>
    </physiologicalReaction>
</comment>
<comment type="catalytic activity">
    <reaction evidence="1">
        <text>1-O-hexadecyl-sn-glycero-3-phosphocholine + H2O = 1-O-hexadecyl-sn-glycero-3-phosphate + choline + H(+)</text>
        <dbReference type="Rhea" id="RHEA:41143"/>
        <dbReference type="ChEBI" id="CHEBI:15354"/>
        <dbReference type="ChEBI" id="CHEBI:15377"/>
        <dbReference type="ChEBI" id="CHEBI:15378"/>
        <dbReference type="ChEBI" id="CHEBI:64496"/>
        <dbReference type="ChEBI" id="CHEBI:77580"/>
    </reaction>
    <physiologicalReaction direction="left-to-right" evidence="1">
        <dbReference type="Rhea" id="RHEA:41144"/>
    </physiologicalReaction>
</comment>
<comment type="activity regulation">
    <text evidence="3">Lysophospholipase D activity is stimulated by calcium. Loss of lysophospholipase D activity in presence of EDTA.</text>
</comment>
<comment type="subcellular location">
    <subcellularLocation>
        <location evidence="1">Membrane</location>
        <topology evidence="1">Multi-pass membrane protein</topology>
    </subcellularLocation>
    <subcellularLocation>
        <location evidence="1">Cytoplasm</location>
        <location evidence="1">Perinuclear region</location>
    </subcellularLocation>
    <subcellularLocation>
        <location evidence="3">Endoplasmic reticulum</location>
    </subcellularLocation>
    <text evidence="1">Partially co-localized with CANX.</text>
</comment>
<comment type="alternative products">
    <event type="alternative splicing"/>
    <isoform>
        <id>Q7L5L3-2</id>
        <name>1</name>
        <sequence type="displayed"/>
    </isoform>
    <isoform>
        <id>Q7L5L3-1</id>
        <name>2</name>
        <sequence type="described" ref="VSP_036888"/>
    </isoform>
</comment>
<comment type="tissue specificity">
    <text evidence="3">Widely expressed, with high level in kidney and ovary.</text>
</comment>
<comment type="similarity">
    <text evidence="6">Belongs to the glycerophosphoryl diester phosphodiesterase family.</text>
</comment>
<comment type="sequence caution" evidence="6">
    <conflict type="erroneous initiation">
        <sequence resource="EMBL-CDS" id="AAH02714"/>
    </conflict>
</comment>